<evidence type="ECO:0000250" key="1"/>
<evidence type="ECO:0000250" key="2">
    <source>
        <dbReference type="UniProtKB" id="P68363"/>
    </source>
</evidence>
<evidence type="ECO:0000305" key="3"/>
<reference key="1">
    <citation type="journal article" date="1992" name="J. Mol. Biol.">
        <title>Alpha-tubulin gene family of maize (Zea mays L.). Evidence for two ancient alpha-tubulin genes in plants.</title>
        <authorList>
            <person name="Villemur R."/>
            <person name="Joyce C.M."/>
            <person name="Haas N.A."/>
            <person name="Goddard R.H."/>
            <person name="Kopczak S.D."/>
            <person name="Hussey P.J."/>
            <person name="Snustad D.P."/>
            <person name="Silflow C.D."/>
        </authorList>
    </citation>
    <scope>NUCLEOTIDE SEQUENCE [MRNA]</scope>
    <source>
        <strain>cv. B73</strain>
        <tissue>Shoot</tissue>
    </source>
</reference>
<dbReference type="EC" id="3.6.5.-" evidence="2"/>
<dbReference type="EMBL" id="X63178">
    <property type="protein sequence ID" value="CAA44863.1"/>
    <property type="molecule type" value="mRNA"/>
</dbReference>
<dbReference type="PIR" id="S28983">
    <property type="entry name" value="S28983"/>
</dbReference>
<dbReference type="RefSeq" id="NP_001105588.1">
    <property type="nucleotide sequence ID" value="NM_001112118.2"/>
</dbReference>
<dbReference type="SMR" id="P33627"/>
<dbReference type="FunCoup" id="P33627">
    <property type="interactions" value="2357"/>
</dbReference>
<dbReference type="STRING" id="4577.P33627"/>
<dbReference type="PaxDb" id="4577-GRMZM2G083243_P01"/>
<dbReference type="EnsemblPlants" id="Zm00001eb325230_T002">
    <property type="protein sequence ID" value="Zm00001eb325230_P002"/>
    <property type="gene ID" value="Zm00001eb325230"/>
</dbReference>
<dbReference type="GeneID" id="542582"/>
<dbReference type="Gramene" id="Zm00001eb325230_T002">
    <property type="protein sequence ID" value="Zm00001eb325230_P002"/>
    <property type="gene ID" value="Zm00001eb325230"/>
</dbReference>
<dbReference type="KEGG" id="zma:542582"/>
<dbReference type="MaizeGDB" id="17141"/>
<dbReference type="eggNOG" id="KOG1376">
    <property type="taxonomic scope" value="Eukaryota"/>
</dbReference>
<dbReference type="HOGENOM" id="CLU_015718_0_0_1"/>
<dbReference type="InParanoid" id="P33627"/>
<dbReference type="OMA" id="VIDANCT"/>
<dbReference type="OrthoDB" id="6049624at2759"/>
<dbReference type="Proteomes" id="UP000007305">
    <property type="component" value="Chromosome 7"/>
</dbReference>
<dbReference type="ExpressionAtlas" id="P33627">
    <property type="expression patterns" value="baseline and differential"/>
</dbReference>
<dbReference type="GO" id="GO:0005737">
    <property type="term" value="C:cytoplasm"/>
    <property type="evidence" value="ECO:0000318"/>
    <property type="project" value="GO_Central"/>
</dbReference>
<dbReference type="GO" id="GO:0005874">
    <property type="term" value="C:microtubule"/>
    <property type="evidence" value="ECO:0000318"/>
    <property type="project" value="GO_Central"/>
</dbReference>
<dbReference type="GO" id="GO:0005525">
    <property type="term" value="F:GTP binding"/>
    <property type="evidence" value="ECO:0000318"/>
    <property type="project" value="GO_Central"/>
</dbReference>
<dbReference type="GO" id="GO:0016787">
    <property type="term" value="F:hydrolase activity"/>
    <property type="evidence" value="ECO:0007669"/>
    <property type="project" value="UniProtKB-KW"/>
</dbReference>
<dbReference type="GO" id="GO:0046872">
    <property type="term" value="F:metal ion binding"/>
    <property type="evidence" value="ECO:0007669"/>
    <property type="project" value="UniProtKB-KW"/>
</dbReference>
<dbReference type="GO" id="GO:0005200">
    <property type="term" value="F:structural constituent of cytoskeleton"/>
    <property type="evidence" value="ECO:0000318"/>
    <property type="project" value="GO_Central"/>
</dbReference>
<dbReference type="GO" id="GO:0000226">
    <property type="term" value="P:microtubule cytoskeleton organization"/>
    <property type="evidence" value="ECO:0000318"/>
    <property type="project" value="GO_Central"/>
</dbReference>
<dbReference type="GO" id="GO:0000278">
    <property type="term" value="P:mitotic cell cycle"/>
    <property type="evidence" value="ECO:0000318"/>
    <property type="project" value="GO_Central"/>
</dbReference>
<dbReference type="CDD" id="cd02186">
    <property type="entry name" value="alpha_tubulin"/>
    <property type="match status" value="1"/>
</dbReference>
<dbReference type="FunFam" id="1.10.287.600:FF:000005">
    <property type="entry name" value="Tubulin alpha chain"/>
    <property type="match status" value="1"/>
</dbReference>
<dbReference type="FunFam" id="3.30.1330.20:FF:000001">
    <property type="entry name" value="Tubulin alpha chain"/>
    <property type="match status" value="1"/>
</dbReference>
<dbReference type="FunFam" id="3.40.50.1440:FF:000004">
    <property type="entry name" value="Tubulin alpha chain"/>
    <property type="match status" value="1"/>
</dbReference>
<dbReference type="Gene3D" id="1.10.287.600">
    <property type="entry name" value="Helix hairpin bin"/>
    <property type="match status" value="1"/>
</dbReference>
<dbReference type="Gene3D" id="3.30.1330.20">
    <property type="entry name" value="Tubulin/FtsZ, C-terminal domain"/>
    <property type="match status" value="1"/>
</dbReference>
<dbReference type="Gene3D" id="3.40.50.1440">
    <property type="entry name" value="Tubulin/FtsZ, GTPase domain"/>
    <property type="match status" value="1"/>
</dbReference>
<dbReference type="InterPro" id="IPR002452">
    <property type="entry name" value="Alpha_tubulin"/>
</dbReference>
<dbReference type="InterPro" id="IPR013838">
    <property type="entry name" value="Beta-tubulin_BS"/>
</dbReference>
<dbReference type="InterPro" id="IPR008280">
    <property type="entry name" value="Tub_FtsZ_C"/>
</dbReference>
<dbReference type="InterPro" id="IPR000217">
    <property type="entry name" value="Tubulin"/>
</dbReference>
<dbReference type="InterPro" id="IPR037103">
    <property type="entry name" value="Tubulin/FtsZ-like_C"/>
</dbReference>
<dbReference type="InterPro" id="IPR018316">
    <property type="entry name" value="Tubulin/FtsZ_2-layer-sand-dom"/>
</dbReference>
<dbReference type="InterPro" id="IPR036525">
    <property type="entry name" value="Tubulin/FtsZ_GTPase_sf"/>
</dbReference>
<dbReference type="InterPro" id="IPR023123">
    <property type="entry name" value="Tubulin_C"/>
</dbReference>
<dbReference type="InterPro" id="IPR017975">
    <property type="entry name" value="Tubulin_CS"/>
</dbReference>
<dbReference type="InterPro" id="IPR003008">
    <property type="entry name" value="Tubulin_FtsZ_GTPase"/>
</dbReference>
<dbReference type="PANTHER" id="PTHR11588">
    <property type="entry name" value="TUBULIN"/>
    <property type="match status" value="1"/>
</dbReference>
<dbReference type="Pfam" id="PF00091">
    <property type="entry name" value="Tubulin"/>
    <property type="match status" value="1"/>
</dbReference>
<dbReference type="Pfam" id="PF03953">
    <property type="entry name" value="Tubulin_C"/>
    <property type="match status" value="1"/>
</dbReference>
<dbReference type="PRINTS" id="PR01162">
    <property type="entry name" value="ALPHATUBULIN"/>
</dbReference>
<dbReference type="PRINTS" id="PR01161">
    <property type="entry name" value="TUBULIN"/>
</dbReference>
<dbReference type="SMART" id="SM00864">
    <property type="entry name" value="Tubulin"/>
    <property type="match status" value="1"/>
</dbReference>
<dbReference type="SMART" id="SM00865">
    <property type="entry name" value="Tubulin_C"/>
    <property type="match status" value="1"/>
</dbReference>
<dbReference type="SUPFAM" id="SSF55307">
    <property type="entry name" value="Tubulin C-terminal domain-like"/>
    <property type="match status" value="1"/>
</dbReference>
<dbReference type="SUPFAM" id="SSF52490">
    <property type="entry name" value="Tubulin nucleotide-binding domain-like"/>
    <property type="match status" value="1"/>
</dbReference>
<dbReference type="PROSITE" id="PS00227">
    <property type="entry name" value="TUBULIN"/>
    <property type="match status" value="1"/>
</dbReference>
<protein>
    <recommendedName>
        <fullName>Tubulin alpha-6 chain</fullName>
        <ecNumber evidence="2">3.6.5.-</ecNumber>
    </recommendedName>
    <alternativeName>
        <fullName>Alpha-6-tubulin</fullName>
    </alternativeName>
</protein>
<name>TBA6_MAIZE</name>
<comment type="function">
    <text>Tubulin is the major constituent of microtubules, a cylinder consisting of laterally associated linear protofilaments composed of alpha- and beta-tubulin heterodimers. Microtubules grow by the addition of GTP-tubulin dimers to the microtubule end, where a stabilizing cap forms. Below the cap, tubulin dimers are in GDP-bound state, owing to GTPase activity of alpha-tubulin.</text>
</comment>
<comment type="catalytic activity">
    <reaction evidence="2">
        <text>GTP + H2O = GDP + phosphate + H(+)</text>
        <dbReference type="Rhea" id="RHEA:19669"/>
        <dbReference type="ChEBI" id="CHEBI:15377"/>
        <dbReference type="ChEBI" id="CHEBI:15378"/>
        <dbReference type="ChEBI" id="CHEBI:37565"/>
        <dbReference type="ChEBI" id="CHEBI:43474"/>
        <dbReference type="ChEBI" id="CHEBI:58189"/>
    </reaction>
    <physiologicalReaction direction="left-to-right" evidence="2">
        <dbReference type="Rhea" id="RHEA:19670"/>
    </physiologicalReaction>
</comment>
<comment type="cofactor">
    <cofactor evidence="2">
        <name>Mg(2+)</name>
        <dbReference type="ChEBI" id="CHEBI:18420"/>
    </cofactor>
</comment>
<comment type="subunit">
    <text>Dimer of alpha and beta chains. A typical microtubule is a hollow water-filled tube with an outer diameter of 25 nm and an inner diameter of 15 nM. Alpha-beta heterodimers associate head-to-tail to form protofilaments running lengthwise along the microtubule wall with the beta-tubulin subunit facing the microtubule plus end conferring a structural polarity. Microtubules usually have 13 protofilaments but different protofilament numbers can be found in some organisms and specialized cells.</text>
</comment>
<comment type="subcellular location">
    <subcellularLocation>
        <location>Cytoplasm</location>
        <location>Cytoskeleton</location>
    </subcellularLocation>
</comment>
<comment type="PTM">
    <text evidence="1">Undergoes a tyrosination/detyrosination cycle, the cyclic removal and re-addition of a C-terminal tyrosine residue by the enzymes tubulin tyrosine carboxypeptidase (TTCP) and tubulin tyrosine ligase (TTL), respectively.</text>
</comment>
<comment type="similarity">
    <text evidence="3">Belongs to the tubulin family.</text>
</comment>
<keyword id="KW-0963">Cytoplasm</keyword>
<keyword id="KW-0206">Cytoskeleton</keyword>
<keyword id="KW-0342">GTP-binding</keyword>
<keyword id="KW-0378">Hydrolase</keyword>
<keyword id="KW-0460">Magnesium</keyword>
<keyword id="KW-0479">Metal-binding</keyword>
<keyword id="KW-0493">Microtubule</keyword>
<keyword id="KW-0547">Nucleotide-binding</keyword>
<keyword id="KW-1185">Reference proteome</keyword>
<feature type="chain" id="PRO_0000048193" description="Tubulin alpha-6 chain">
    <location>
        <begin position="1"/>
        <end position="450"/>
    </location>
</feature>
<feature type="active site" evidence="2">
    <location>
        <position position="254"/>
    </location>
</feature>
<feature type="binding site" evidence="2">
    <location>
        <position position="11"/>
    </location>
    <ligand>
        <name>GTP</name>
        <dbReference type="ChEBI" id="CHEBI:37565"/>
    </ligand>
</feature>
<feature type="binding site" evidence="2">
    <location>
        <position position="71"/>
    </location>
    <ligand>
        <name>GTP</name>
        <dbReference type="ChEBI" id="CHEBI:37565"/>
    </ligand>
</feature>
<feature type="binding site" evidence="2">
    <location>
        <position position="71"/>
    </location>
    <ligand>
        <name>Mg(2+)</name>
        <dbReference type="ChEBI" id="CHEBI:18420"/>
    </ligand>
</feature>
<feature type="binding site" evidence="2">
    <location>
        <position position="144"/>
    </location>
    <ligand>
        <name>GTP</name>
        <dbReference type="ChEBI" id="CHEBI:37565"/>
    </ligand>
</feature>
<feature type="binding site" evidence="2">
    <location>
        <position position="145"/>
    </location>
    <ligand>
        <name>GTP</name>
        <dbReference type="ChEBI" id="CHEBI:37565"/>
    </ligand>
</feature>
<feature type="binding site" evidence="2">
    <location>
        <position position="179"/>
    </location>
    <ligand>
        <name>GTP</name>
        <dbReference type="ChEBI" id="CHEBI:37565"/>
    </ligand>
</feature>
<feature type="binding site" evidence="2">
    <location>
        <position position="206"/>
    </location>
    <ligand>
        <name>GTP</name>
        <dbReference type="ChEBI" id="CHEBI:37565"/>
    </ligand>
</feature>
<feature type="binding site" evidence="2">
    <location>
        <position position="228"/>
    </location>
    <ligand>
        <name>GTP</name>
        <dbReference type="ChEBI" id="CHEBI:37565"/>
    </ligand>
</feature>
<feature type="site" description="Involved in polymerization">
    <location>
        <position position="450"/>
    </location>
</feature>
<sequence length="450" mass="49599">MREIISIHIGQAGIQVGNACWELYCLEHGIEPDGTMPSDTSVGVAHDAFNTFFSETGSGKHVPRAIFVDLEPTVIDEVRTGSYRQLFHPEQLISGKEDAANNFARGHYTVGKEIVDLCLDRVRKLADNCTGLQGFLVFNAVGGGTGSGLGSLLLERLSVDYGKKSKLGFTIYPSPQVSTAVVEPYNSVLSTHSLLEHTDVAVLLDNEAIYDICRRSLDIERPTYTNLNRLISQIISSLTTSLRFDGAINVDVTEFQTNLVPYPRIHFMLSSYAPVISAEKAYHEQLSVPEITNAVFEPSSMMAKCDPRHGKYMACCLMYRGDVVPKDVNAAVATIKTKRTVQFVDWCPTGFKCGINYQPPSVVPGGDLAKVQRAVCMISNNTAVAEVFSRIDHKFDLMYAKRAFVHWYVGEGMEEGEFSEAREDLAALEKDYEEVGAEGADDEGDEGDDY</sequence>
<accession>P33627</accession>
<gene>
    <name type="primary">TUBA6</name>
    <name type="synonym">TUA6</name>
</gene>
<proteinExistence type="evidence at transcript level"/>
<organism>
    <name type="scientific">Zea mays</name>
    <name type="common">Maize</name>
    <dbReference type="NCBI Taxonomy" id="4577"/>
    <lineage>
        <taxon>Eukaryota</taxon>
        <taxon>Viridiplantae</taxon>
        <taxon>Streptophyta</taxon>
        <taxon>Embryophyta</taxon>
        <taxon>Tracheophyta</taxon>
        <taxon>Spermatophyta</taxon>
        <taxon>Magnoliopsida</taxon>
        <taxon>Liliopsida</taxon>
        <taxon>Poales</taxon>
        <taxon>Poaceae</taxon>
        <taxon>PACMAD clade</taxon>
        <taxon>Panicoideae</taxon>
        <taxon>Andropogonodae</taxon>
        <taxon>Andropogoneae</taxon>
        <taxon>Tripsacinae</taxon>
        <taxon>Zea</taxon>
    </lineage>
</organism>